<accession>P39295</accession>
<accession>Q2M6C0</accession>
<protein>
    <recommendedName>
        <fullName>Uncharacterized protein YjfM</fullName>
    </recommendedName>
</protein>
<reference key="1">
    <citation type="journal article" date="1995" name="Nucleic Acids Res.">
        <title>Analysis of the Escherichia coli genome VI: DNA sequence of the region from 92.8 through 100 minutes.</title>
        <authorList>
            <person name="Burland V.D."/>
            <person name="Plunkett G. III"/>
            <person name="Sofia H.J."/>
            <person name="Daniels D.L."/>
            <person name="Blattner F.R."/>
        </authorList>
    </citation>
    <scope>NUCLEOTIDE SEQUENCE [LARGE SCALE GENOMIC DNA]</scope>
    <source>
        <strain>K12 / MG1655 / ATCC 47076</strain>
    </source>
</reference>
<reference key="2">
    <citation type="journal article" date="1997" name="Science">
        <title>The complete genome sequence of Escherichia coli K-12.</title>
        <authorList>
            <person name="Blattner F.R."/>
            <person name="Plunkett G. III"/>
            <person name="Bloch C.A."/>
            <person name="Perna N.T."/>
            <person name="Burland V."/>
            <person name="Riley M."/>
            <person name="Collado-Vides J."/>
            <person name="Glasner J.D."/>
            <person name="Rode C.K."/>
            <person name="Mayhew G.F."/>
            <person name="Gregor J."/>
            <person name="Davis N.W."/>
            <person name="Kirkpatrick H.A."/>
            <person name="Goeden M.A."/>
            <person name="Rose D.J."/>
            <person name="Mau B."/>
            <person name="Shao Y."/>
        </authorList>
    </citation>
    <scope>NUCLEOTIDE SEQUENCE [LARGE SCALE GENOMIC DNA]</scope>
    <source>
        <strain>K12 / MG1655 / ATCC 47076</strain>
    </source>
</reference>
<reference key="3">
    <citation type="journal article" date="2006" name="Mol. Syst. Biol.">
        <title>Highly accurate genome sequences of Escherichia coli K-12 strains MG1655 and W3110.</title>
        <authorList>
            <person name="Hayashi K."/>
            <person name="Morooka N."/>
            <person name="Yamamoto Y."/>
            <person name="Fujita K."/>
            <person name="Isono K."/>
            <person name="Choi S."/>
            <person name="Ohtsubo E."/>
            <person name="Baba T."/>
            <person name="Wanner B.L."/>
            <person name="Mori H."/>
            <person name="Horiuchi T."/>
        </authorList>
    </citation>
    <scope>NUCLEOTIDE SEQUENCE [LARGE SCALE GENOMIC DNA]</scope>
    <source>
        <strain>K12 / W3110 / ATCC 27325 / DSM 5911</strain>
    </source>
</reference>
<feature type="chain" id="PRO_0000169752" description="Uncharacterized protein YjfM">
    <location>
        <begin position="1"/>
        <end position="212"/>
    </location>
</feature>
<feature type="region of interest" description="Disordered" evidence="1">
    <location>
        <begin position="1"/>
        <end position="25"/>
    </location>
</feature>
<feature type="region of interest" description="Disordered" evidence="1">
    <location>
        <begin position="165"/>
        <end position="212"/>
    </location>
</feature>
<feature type="compositionally biased region" description="Low complexity" evidence="1">
    <location>
        <begin position="202"/>
        <end position="212"/>
    </location>
</feature>
<organism>
    <name type="scientific">Escherichia coli (strain K12)</name>
    <dbReference type="NCBI Taxonomy" id="83333"/>
    <lineage>
        <taxon>Bacteria</taxon>
        <taxon>Pseudomonadati</taxon>
        <taxon>Pseudomonadota</taxon>
        <taxon>Gammaproteobacteria</taxon>
        <taxon>Enterobacterales</taxon>
        <taxon>Enterobacteriaceae</taxon>
        <taxon>Escherichia</taxon>
    </lineage>
</organism>
<proteinExistence type="predicted"/>
<sequence length="212" mass="23352">MARKRKSRNNSKIGHGAISRIGRPNNPFEPCRNRYAQKYLTLALMGGAAFFVLKGCSDSSDVDNDGDGTFYATVQDCIDDGNNADICARGWNNAKTAFYADVPKNMTQQNCQSKYENCYYDNVEQSWIPVVSGFLLSRVIRKDRDEPFVYNSGGSSFASRPVWRSTSGDYSWRSGSGKKESYSSGGFTTKKASTVSRGGYGRSSSARGHWGG</sequence>
<gene>
    <name type="primary">yjfM</name>
    <name type="ordered locus">b4185</name>
    <name type="ordered locus">JW4143</name>
</gene>
<dbReference type="EMBL" id="U14003">
    <property type="protein sequence ID" value="AAA97081.1"/>
    <property type="molecule type" value="Genomic_DNA"/>
</dbReference>
<dbReference type="EMBL" id="U00096">
    <property type="protein sequence ID" value="AAC77142.1"/>
    <property type="molecule type" value="Genomic_DNA"/>
</dbReference>
<dbReference type="EMBL" id="AP009048">
    <property type="protein sequence ID" value="BAE78186.1"/>
    <property type="molecule type" value="Genomic_DNA"/>
</dbReference>
<dbReference type="PIR" id="S56410">
    <property type="entry name" value="S56410"/>
</dbReference>
<dbReference type="RefSeq" id="NP_418606.1">
    <property type="nucleotide sequence ID" value="NC_000913.3"/>
</dbReference>
<dbReference type="RefSeq" id="WP_000101658.1">
    <property type="nucleotide sequence ID" value="NZ_LN832404.1"/>
</dbReference>
<dbReference type="BioGRID" id="4262707">
    <property type="interactions" value="209"/>
</dbReference>
<dbReference type="FunCoup" id="P39295">
    <property type="interactions" value="38"/>
</dbReference>
<dbReference type="IntAct" id="P39295">
    <property type="interactions" value="2"/>
</dbReference>
<dbReference type="STRING" id="511145.b4185"/>
<dbReference type="PaxDb" id="511145-b4185"/>
<dbReference type="EnsemblBacteria" id="AAC77142">
    <property type="protein sequence ID" value="AAC77142"/>
    <property type="gene ID" value="b4185"/>
</dbReference>
<dbReference type="GeneID" id="948700"/>
<dbReference type="KEGG" id="ecj:JW4143"/>
<dbReference type="KEGG" id="eco:b4185"/>
<dbReference type="KEGG" id="ecoc:C3026_22610"/>
<dbReference type="PATRIC" id="fig|511145.12.peg.4317"/>
<dbReference type="EchoBASE" id="EB2381"/>
<dbReference type="eggNOG" id="COG5463">
    <property type="taxonomic scope" value="Bacteria"/>
</dbReference>
<dbReference type="HOGENOM" id="CLU_095624_1_0_6"/>
<dbReference type="InParanoid" id="P39295"/>
<dbReference type="OMA" id="WDACSTA"/>
<dbReference type="OrthoDB" id="6566509at2"/>
<dbReference type="PhylomeDB" id="P39295"/>
<dbReference type="BioCyc" id="EcoCyc:G7850-MONOMER"/>
<dbReference type="PRO" id="PR:P39295"/>
<dbReference type="Proteomes" id="UP000000625">
    <property type="component" value="Chromosome"/>
</dbReference>
<dbReference type="InterPro" id="IPR009576">
    <property type="entry name" value="Biofilm_formation_YgiB"/>
</dbReference>
<dbReference type="Pfam" id="PF06693">
    <property type="entry name" value="DUF1190"/>
    <property type="match status" value="1"/>
</dbReference>
<keyword id="KW-1185">Reference proteome</keyword>
<name>YJFM_ECOLI</name>
<evidence type="ECO:0000256" key="1">
    <source>
        <dbReference type="SAM" id="MobiDB-lite"/>
    </source>
</evidence>